<accession>Q5YNU2</accession>
<keyword id="KW-0067">ATP-binding</keyword>
<keyword id="KW-0436">Ligase</keyword>
<keyword id="KW-0547">Nucleotide-binding</keyword>
<keyword id="KW-1185">Reference proteome</keyword>
<evidence type="ECO:0000255" key="1">
    <source>
        <dbReference type="HAMAP-Rule" id="MF_01609"/>
    </source>
</evidence>
<comment type="function">
    <text evidence="1">ATP-dependent carboxylate-amine ligase which exhibits weak glutamate--cysteine ligase activity.</text>
</comment>
<comment type="catalytic activity">
    <reaction evidence="1">
        <text>L-cysteine + L-glutamate + ATP = gamma-L-glutamyl-L-cysteine + ADP + phosphate + H(+)</text>
        <dbReference type="Rhea" id="RHEA:13285"/>
        <dbReference type="ChEBI" id="CHEBI:15378"/>
        <dbReference type="ChEBI" id="CHEBI:29985"/>
        <dbReference type="ChEBI" id="CHEBI:30616"/>
        <dbReference type="ChEBI" id="CHEBI:35235"/>
        <dbReference type="ChEBI" id="CHEBI:43474"/>
        <dbReference type="ChEBI" id="CHEBI:58173"/>
        <dbReference type="ChEBI" id="CHEBI:456216"/>
        <dbReference type="EC" id="6.3.2.2"/>
    </reaction>
</comment>
<comment type="similarity">
    <text evidence="1">Belongs to the glutamate--cysteine ligase type 2 family. YbdK subfamily.</text>
</comment>
<protein>
    <recommendedName>
        <fullName evidence="1">Putative glutamate--cysteine ligase 2-2</fullName>
        <ecNumber evidence="1">6.3.2.2</ecNumber>
    </recommendedName>
    <alternativeName>
        <fullName evidence="1">Gamma-glutamylcysteine synthetase 2-2</fullName>
        <shortName evidence="1">GCS 2-2</shortName>
        <shortName evidence="1">Gamma-GCS 2-2</shortName>
    </alternativeName>
</protein>
<dbReference type="EC" id="6.3.2.2" evidence="1"/>
<dbReference type="EMBL" id="AP006618">
    <property type="protein sequence ID" value="BAD60149.1"/>
    <property type="molecule type" value="Genomic_DNA"/>
</dbReference>
<dbReference type="RefSeq" id="WP_011211831.1">
    <property type="nucleotide sequence ID" value="NC_006361.1"/>
</dbReference>
<dbReference type="SMR" id="Q5YNU2"/>
<dbReference type="STRING" id="247156.NFA_52970"/>
<dbReference type="GeneID" id="61135872"/>
<dbReference type="KEGG" id="nfa:NFA_52970"/>
<dbReference type="eggNOG" id="COG2170">
    <property type="taxonomic scope" value="Bacteria"/>
</dbReference>
<dbReference type="HOGENOM" id="CLU_044848_1_1_11"/>
<dbReference type="OrthoDB" id="9769628at2"/>
<dbReference type="Proteomes" id="UP000006820">
    <property type="component" value="Chromosome"/>
</dbReference>
<dbReference type="GO" id="GO:0005524">
    <property type="term" value="F:ATP binding"/>
    <property type="evidence" value="ECO:0007669"/>
    <property type="project" value="UniProtKB-KW"/>
</dbReference>
<dbReference type="GO" id="GO:0004357">
    <property type="term" value="F:glutamate-cysteine ligase activity"/>
    <property type="evidence" value="ECO:0007669"/>
    <property type="project" value="UniProtKB-EC"/>
</dbReference>
<dbReference type="GO" id="GO:0042398">
    <property type="term" value="P:modified amino acid biosynthetic process"/>
    <property type="evidence" value="ECO:0007669"/>
    <property type="project" value="InterPro"/>
</dbReference>
<dbReference type="Gene3D" id="3.30.590.20">
    <property type="match status" value="1"/>
</dbReference>
<dbReference type="HAMAP" id="MF_01609">
    <property type="entry name" value="Glu_cys_ligase_2"/>
    <property type="match status" value="1"/>
</dbReference>
<dbReference type="InterPro" id="IPR050141">
    <property type="entry name" value="GCL_type2/YbdK_subfam"/>
</dbReference>
<dbReference type="InterPro" id="IPR006336">
    <property type="entry name" value="GCS2"/>
</dbReference>
<dbReference type="InterPro" id="IPR014746">
    <property type="entry name" value="Gln_synth/guanido_kin_cat_dom"/>
</dbReference>
<dbReference type="InterPro" id="IPR011793">
    <property type="entry name" value="YbdK"/>
</dbReference>
<dbReference type="NCBIfam" id="TIGR02050">
    <property type="entry name" value="gshA_cyan_rel"/>
    <property type="match status" value="1"/>
</dbReference>
<dbReference type="NCBIfam" id="NF010042">
    <property type="entry name" value="PRK13517.1-2"/>
    <property type="match status" value="1"/>
</dbReference>
<dbReference type="NCBIfam" id="NF010043">
    <property type="entry name" value="PRK13517.1-3"/>
    <property type="match status" value="1"/>
</dbReference>
<dbReference type="NCBIfam" id="NF010044">
    <property type="entry name" value="PRK13517.1-4"/>
    <property type="match status" value="1"/>
</dbReference>
<dbReference type="PANTHER" id="PTHR36510">
    <property type="entry name" value="GLUTAMATE--CYSTEINE LIGASE 2-RELATED"/>
    <property type="match status" value="1"/>
</dbReference>
<dbReference type="PANTHER" id="PTHR36510:SF1">
    <property type="entry name" value="GLUTAMATE--CYSTEINE LIGASE 2-RELATED"/>
    <property type="match status" value="1"/>
</dbReference>
<dbReference type="Pfam" id="PF04107">
    <property type="entry name" value="GCS2"/>
    <property type="match status" value="1"/>
</dbReference>
<dbReference type="SUPFAM" id="SSF55931">
    <property type="entry name" value="Glutamine synthetase/guanido kinase"/>
    <property type="match status" value="1"/>
</dbReference>
<sequence length="380" mass="42359">MAGVVESVPFEGSPRPTIGIEWEVALVDKVTRDLSNTAAAVFDAVGDLRAWDGTPQVTKELLRNTVEIVTGVHETVGAAVEDLRGTMDKVRRAADPLGVDVFCAGTHPFAQWSTQQLTRSPHYDELIERTQWWGRQMMIWGVHVHVGVSHREKVFPILNSLLTTFPHLLALSASSPMWAGSDTGYASNRTLMFQQLPTAGLPFQFENWRQFEHFVHDELKTGVFEQLGGLHWDIRPAPKWGTIEVRICDGIPTHAELAAIAAFIHCLIVDLDQRIEDGEQPITLPPWHVQENKWRAARYGLDAIVITDADSNERLVTDDLMDLLNRLEPTAKRLGCADELAYVATIPERGASYQRQRKVAAASQGDLVAVVDALVHELDR</sequence>
<reference key="1">
    <citation type="journal article" date="2004" name="Proc. Natl. Acad. Sci. U.S.A.">
        <title>The complete genomic sequence of Nocardia farcinica IFM 10152.</title>
        <authorList>
            <person name="Ishikawa J."/>
            <person name="Yamashita A."/>
            <person name="Mikami Y."/>
            <person name="Hoshino Y."/>
            <person name="Kurita H."/>
            <person name="Hotta K."/>
            <person name="Shiba T."/>
            <person name="Hattori M."/>
        </authorList>
    </citation>
    <scope>NUCLEOTIDE SEQUENCE [LARGE SCALE GENOMIC DNA]</scope>
    <source>
        <strain>IFM 10152</strain>
    </source>
</reference>
<gene>
    <name type="ordered locus">NFA_52970</name>
</gene>
<organism>
    <name type="scientific">Nocardia farcinica (strain IFM 10152)</name>
    <dbReference type="NCBI Taxonomy" id="247156"/>
    <lineage>
        <taxon>Bacteria</taxon>
        <taxon>Bacillati</taxon>
        <taxon>Actinomycetota</taxon>
        <taxon>Actinomycetes</taxon>
        <taxon>Mycobacteriales</taxon>
        <taxon>Nocardiaceae</taxon>
        <taxon>Nocardia</taxon>
    </lineage>
</organism>
<name>GCS22_NOCFA</name>
<feature type="chain" id="PRO_0000218210" description="Putative glutamate--cysteine ligase 2-2">
    <location>
        <begin position="1"/>
        <end position="380"/>
    </location>
</feature>
<proteinExistence type="inferred from homology"/>